<comment type="function">
    <text evidence="1">Binds to 23S rRNA. Forms part of two intersubunit bridges in the 70S ribosome.</text>
</comment>
<comment type="subunit">
    <text evidence="1">Part of the 50S ribosomal subunit. Forms a cluster with proteins L3 and L19. In the 70S ribosome, L14 and L19 interact and together make contacts with the 16S rRNA in bridges B5 and B8.</text>
</comment>
<comment type="similarity">
    <text evidence="1">Belongs to the universal ribosomal protein uL14 family.</text>
</comment>
<name>RL14_YERPB</name>
<sequence length="123" mass="13582">MIQEQTMLNVADNSGARRVMCIKVLGGSHRRYAGIGDIIKITIKEAIPRGKVKKGDVLKAVVVRTKKGVRRPDGSVIRFDGNACVILNNNSEQPIGTRIFGPVTRELRNEKFMKIISLAPEVL</sequence>
<keyword id="KW-0687">Ribonucleoprotein</keyword>
<keyword id="KW-0689">Ribosomal protein</keyword>
<keyword id="KW-0694">RNA-binding</keyword>
<keyword id="KW-0699">rRNA-binding</keyword>
<reference key="1">
    <citation type="submission" date="2008-04" db="EMBL/GenBank/DDBJ databases">
        <title>Complete sequence of Yersinia pseudotuberculosis PB1/+.</title>
        <authorList>
            <person name="Copeland A."/>
            <person name="Lucas S."/>
            <person name="Lapidus A."/>
            <person name="Glavina del Rio T."/>
            <person name="Dalin E."/>
            <person name="Tice H."/>
            <person name="Bruce D."/>
            <person name="Goodwin L."/>
            <person name="Pitluck S."/>
            <person name="Munk A.C."/>
            <person name="Brettin T."/>
            <person name="Detter J.C."/>
            <person name="Han C."/>
            <person name="Tapia R."/>
            <person name="Schmutz J."/>
            <person name="Larimer F."/>
            <person name="Land M."/>
            <person name="Hauser L."/>
            <person name="Challacombe J.F."/>
            <person name="Green L."/>
            <person name="Lindler L.E."/>
            <person name="Nikolich M.P."/>
            <person name="Richardson P."/>
        </authorList>
    </citation>
    <scope>NUCLEOTIDE SEQUENCE [LARGE SCALE GENOMIC DNA]</scope>
    <source>
        <strain>PB1/+</strain>
    </source>
</reference>
<proteinExistence type="inferred from homology"/>
<feature type="chain" id="PRO_1000144354" description="Large ribosomal subunit protein uL14">
    <location>
        <begin position="1"/>
        <end position="123"/>
    </location>
</feature>
<gene>
    <name evidence="1" type="primary">rplN</name>
    <name type="ordered locus">YPTS_3880</name>
</gene>
<accession>B2K5M0</accession>
<dbReference type="EMBL" id="CP001048">
    <property type="protein sequence ID" value="ACC90829.1"/>
    <property type="molecule type" value="Genomic_DNA"/>
</dbReference>
<dbReference type="RefSeq" id="WP_002213325.1">
    <property type="nucleotide sequence ID" value="NZ_CP009780.1"/>
</dbReference>
<dbReference type="SMR" id="B2K5M0"/>
<dbReference type="GeneID" id="97454241"/>
<dbReference type="KEGG" id="ypb:YPTS_3880"/>
<dbReference type="PATRIC" id="fig|502801.10.peg.3345"/>
<dbReference type="GO" id="GO:0022625">
    <property type="term" value="C:cytosolic large ribosomal subunit"/>
    <property type="evidence" value="ECO:0007669"/>
    <property type="project" value="TreeGrafter"/>
</dbReference>
<dbReference type="GO" id="GO:0070180">
    <property type="term" value="F:large ribosomal subunit rRNA binding"/>
    <property type="evidence" value="ECO:0007669"/>
    <property type="project" value="TreeGrafter"/>
</dbReference>
<dbReference type="GO" id="GO:0003735">
    <property type="term" value="F:structural constituent of ribosome"/>
    <property type="evidence" value="ECO:0007669"/>
    <property type="project" value="InterPro"/>
</dbReference>
<dbReference type="GO" id="GO:0006412">
    <property type="term" value="P:translation"/>
    <property type="evidence" value="ECO:0007669"/>
    <property type="project" value="UniProtKB-UniRule"/>
</dbReference>
<dbReference type="CDD" id="cd00337">
    <property type="entry name" value="Ribosomal_uL14"/>
    <property type="match status" value="1"/>
</dbReference>
<dbReference type="FunFam" id="2.40.150.20:FF:000001">
    <property type="entry name" value="50S ribosomal protein L14"/>
    <property type="match status" value="1"/>
</dbReference>
<dbReference type="Gene3D" id="2.40.150.20">
    <property type="entry name" value="Ribosomal protein L14"/>
    <property type="match status" value="1"/>
</dbReference>
<dbReference type="HAMAP" id="MF_01367">
    <property type="entry name" value="Ribosomal_uL14"/>
    <property type="match status" value="1"/>
</dbReference>
<dbReference type="InterPro" id="IPR000218">
    <property type="entry name" value="Ribosomal_uL14"/>
</dbReference>
<dbReference type="InterPro" id="IPR005745">
    <property type="entry name" value="Ribosomal_uL14_bac-type"/>
</dbReference>
<dbReference type="InterPro" id="IPR019972">
    <property type="entry name" value="Ribosomal_uL14_CS"/>
</dbReference>
<dbReference type="InterPro" id="IPR036853">
    <property type="entry name" value="Ribosomal_uL14_sf"/>
</dbReference>
<dbReference type="NCBIfam" id="TIGR01067">
    <property type="entry name" value="rplN_bact"/>
    <property type="match status" value="1"/>
</dbReference>
<dbReference type="PANTHER" id="PTHR11761">
    <property type="entry name" value="50S/60S RIBOSOMAL PROTEIN L14/L23"/>
    <property type="match status" value="1"/>
</dbReference>
<dbReference type="PANTHER" id="PTHR11761:SF3">
    <property type="entry name" value="LARGE RIBOSOMAL SUBUNIT PROTEIN UL14M"/>
    <property type="match status" value="1"/>
</dbReference>
<dbReference type="Pfam" id="PF00238">
    <property type="entry name" value="Ribosomal_L14"/>
    <property type="match status" value="1"/>
</dbReference>
<dbReference type="SMART" id="SM01374">
    <property type="entry name" value="Ribosomal_L14"/>
    <property type="match status" value="1"/>
</dbReference>
<dbReference type="SUPFAM" id="SSF50193">
    <property type="entry name" value="Ribosomal protein L14"/>
    <property type="match status" value="1"/>
</dbReference>
<dbReference type="PROSITE" id="PS00049">
    <property type="entry name" value="RIBOSOMAL_L14"/>
    <property type="match status" value="1"/>
</dbReference>
<protein>
    <recommendedName>
        <fullName evidence="1">Large ribosomal subunit protein uL14</fullName>
    </recommendedName>
    <alternativeName>
        <fullName evidence="2">50S ribosomal protein L14</fullName>
    </alternativeName>
</protein>
<evidence type="ECO:0000255" key="1">
    <source>
        <dbReference type="HAMAP-Rule" id="MF_01367"/>
    </source>
</evidence>
<evidence type="ECO:0000305" key="2"/>
<organism>
    <name type="scientific">Yersinia pseudotuberculosis serotype IB (strain PB1/+)</name>
    <dbReference type="NCBI Taxonomy" id="502801"/>
    <lineage>
        <taxon>Bacteria</taxon>
        <taxon>Pseudomonadati</taxon>
        <taxon>Pseudomonadota</taxon>
        <taxon>Gammaproteobacteria</taxon>
        <taxon>Enterobacterales</taxon>
        <taxon>Yersiniaceae</taxon>
        <taxon>Yersinia</taxon>
    </lineage>
</organism>